<comment type="function">
    <text evidence="1">Produces ATP from ADP in the presence of a proton gradient across the membrane. The alpha chain is a regulatory subunit.</text>
</comment>
<comment type="catalytic activity">
    <reaction evidence="1">
        <text>ATP + H2O + 4 H(+)(in) = ADP + phosphate + 5 H(+)(out)</text>
        <dbReference type="Rhea" id="RHEA:57720"/>
        <dbReference type="ChEBI" id="CHEBI:15377"/>
        <dbReference type="ChEBI" id="CHEBI:15378"/>
        <dbReference type="ChEBI" id="CHEBI:30616"/>
        <dbReference type="ChEBI" id="CHEBI:43474"/>
        <dbReference type="ChEBI" id="CHEBI:456216"/>
        <dbReference type="EC" id="7.1.2.2"/>
    </reaction>
</comment>
<comment type="subunit">
    <text evidence="1">F-type ATPases have 2 components, CF(1) - the catalytic core - and CF(0) - the membrane proton channel. CF(1) has five subunits: alpha(3), beta(3), gamma(1), delta(1), epsilon(1). CF(0) has three main subunits: a(1), b(2) and c(9-12). The alpha and beta chains form an alternating ring which encloses part of the gamma chain. CF(1) is attached to CF(0) by a central stalk formed by the gamma and epsilon chains, while a peripheral stalk is formed by the delta and b chains.</text>
</comment>
<comment type="subcellular location">
    <subcellularLocation>
        <location evidence="1">Cell inner membrane</location>
        <topology evidence="1">Peripheral membrane protein</topology>
    </subcellularLocation>
</comment>
<comment type="similarity">
    <text evidence="1">Belongs to the ATPase alpha/beta chains family.</text>
</comment>
<name>ATPA_PSEAE</name>
<feature type="chain" id="PRO_0000238327" description="ATP synthase subunit alpha">
    <location>
        <begin position="1"/>
        <end position="514"/>
    </location>
</feature>
<feature type="binding site" evidence="1">
    <location>
        <begin position="170"/>
        <end position="177"/>
    </location>
    <ligand>
        <name>ATP</name>
        <dbReference type="ChEBI" id="CHEBI:30616"/>
    </ligand>
</feature>
<feature type="site" description="Required for activity" evidence="1">
    <location>
        <position position="374"/>
    </location>
</feature>
<accession>Q9HT18</accession>
<keyword id="KW-0066">ATP synthesis</keyword>
<keyword id="KW-0067">ATP-binding</keyword>
<keyword id="KW-0997">Cell inner membrane</keyword>
<keyword id="KW-1003">Cell membrane</keyword>
<keyword id="KW-0139">CF(1)</keyword>
<keyword id="KW-0375">Hydrogen ion transport</keyword>
<keyword id="KW-0406">Ion transport</keyword>
<keyword id="KW-0472">Membrane</keyword>
<keyword id="KW-0547">Nucleotide-binding</keyword>
<keyword id="KW-1185">Reference proteome</keyword>
<keyword id="KW-1278">Translocase</keyword>
<keyword id="KW-0813">Transport</keyword>
<reference key="1">
    <citation type="journal article" date="2000" name="Nature">
        <title>Complete genome sequence of Pseudomonas aeruginosa PAO1, an opportunistic pathogen.</title>
        <authorList>
            <person name="Stover C.K."/>
            <person name="Pham X.-Q.T."/>
            <person name="Erwin A.L."/>
            <person name="Mizoguchi S.D."/>
            <person name="Warrener P."/>
            <person name="Hickey M.J."/>
            <person name="Brinkman F.S.L."/>
            <person name="Hufnagle W.O."/>
            <person name="Kowalik D.J."/>
            <person name="Lagrou M."/>
            <person name="Garber R.L."/>
            <person name="Goltry L."/>
            <person name="Tolentino E."/>
            <person name="Westbrock-Wadman S."/>
            <person name="Yuan Y."/>
            <person name="Brody L.L."/>
            <person name="Coulter S.N."/>
            <person name="Folger K.R."/>
            <person name="Kas A."/>
            <person name="Larbig K."/>
            <person name="Lim R.M."/>
            <person name="Smith K.A."/>
            <person name="Spencer D.H."/>
            <person name="Wong G.K.-S."/>
            <person name="Wu Z."/>
            <person name="Paulsen I.T."/>
            <person name="Reizer J."/>
            <person name="Saier M.H. Jr."/>
            <person name="Hancock R.E.W."/>
            <person name="Lory S."/>
            <person name="Olson M.V."/>
        </authorList>
    </citation>
    <scope>NUCLEOTIDE SEQUENCE [LARGE SCALE GENOMIC DNA]</scope>
    <source>
        <strain>ATCC 15692 / DSM 22644 / CIP 104116 / JCM 14847 / LMG 12228 / 1C / PRS 101 / PAO1</strain>
    </source>
</reference>
<dbReference type="EC" id="7.1.2.2" evidence="1"/>
<dbReference type="EMBL" id="AE004091">
    <property type="protein sequence ID" value="AAG08941.1"/>
    <property type="molecule type" value="Genomic_DNA"/>
</dbReference>
<dbReference type="PIR" id="E82952">
    <property type="entry name" value="E82952"/>
</dbReference>
<dbReference type="RefSeq" id="NP_254243.1">
    <property type="nucleotide sequence ID" value="NC_002516.2"/>
</dbReference>
<dbReference type="RefSeq" id="WP_003097134.1">
    <property type="nucleotide sequence ID" value="NZ_QZGE01000012.1"/>
</dbReference>
<dbReference type="SMR" id="Q9HT18"/>
<dbReference type="FunCoup" id="Q9HT18">
    <property type="interactions" value="551"/>
</dbReference>
<dbReference type="STRING" id="208964.PA5556"/>
<dbReference type="PaxDb" id="208964-PA5556"/>
<dbReference type="GeneID" id="77224109"/>
<dbReference type="GeneID" id="877752"/>
<dbReference type="KEGG" id="pae:PA5556"/>
<dbReference type="PATRIC" id="fig|208964.12.peg.5822"/>
<dbReference type="PseudoCAP" id="PA5556"/>
<dbReference type="HOGENOM" id="CLU_010091_2_1_6"/>
<dbReference type="InParanoid" id="Q9HT18"/>
<dbReference type="OrthoDB" id="9803053at2"/>
<dbReference type="PhylomeDB" id="Q9HT18"/>
<dbReference type="BioCyc" id="PAER208964:G1FZ6-5683-MONOMER"/>
<dbReference type="Proteomes" id="UP000002438">
    <property type="component" value="Chromosome"/>
</dbReference>
<dbReference type="GO" id="GO:0005886">
    <property type="term" value="C:plasma membrane"/>
    <property type="evidence" value="ECO:0007669"/>
    <property type="project" value="UniProtKB-SubCell"/>
</dbReference>
<dbReference type="GO" id="GO:0045259">
    <property type="term" value="C:proton-transporting ATP synthase complex"/>
    <property type="evidence" value="ECO:0007669"/>
    <property type="project" value="UniProtKB-KW"/>
</dbReference>
<dbReference type="GO" id="GO:0043531">
    <property type="term" value="F:ADP binding"/>
    <property type="evidence" value="ECO:0000318"/>
    <property type="project" value="GO_Central"/>
</dbReference>
<dbReference type="GO" id="GO:0005524">
    <property type="term" value="F:ATP binding"/>
    <property type="evidence" value="ECO:0000318"/>
    <property type="project" value="GO_Central"/>
</dbReference>
<dbReference type="GO" id="GO:0046933">
    <property type="term" value="F:proton-transporting ATP synthase activity, rotational mechanism"/>
    <property type="evidence" value="ECO:0007669"/>
    <property type="project" value="UniProtKB-UniRule"/>
</dbReference>
<dbReference type="GO" id="GO:0015986">
    <property type="term" value="P:proton motive force-driven ATP synthesis"/>
    <property type="evidence" value="ECO:0000318"/>
    <property type="project" value="GO_Central"/>
</dbReference>
<dbReference type="CDD" id="cd18113">
    <property type="entry name" value="ATP-synt_F1_alpha_C"/>
    <property type="match status" value="1"/>
</dbReference>
<dbReference type="CDD" id="cd18116">
    <property type="entry name" value="ATP-synt_F1_alpha_N"/>
    <property type="match status" value="1"/>
</dbReference>
<dbReference type="CDD" id="cd01132">
    <property type="entry name" value="F1-ATPase_alpha_CD"/>
    <property type="match status" value="1"/>
</dbReference>
<dbReference type="FunFam" id="1.20.150.20:FF:000001">
    <property type="entry name" value="ATP synthase subunit alpha"/>
    <property type="match status" value="1"/>
</dbReference>
<dbReference type="FunFam" id="2.40.30.20:FF:000001">
    <property type="entry name" value="ATP synthase subunit alpha"/>
    <property type="match status" value="1"/>
</dbReference>
<dbReference type="FunFam" id="3.40.50.300:FF:000002">
    <property type="entry name" value="ATP synthase subunit alpha"/>
    <property type="match status" value="1"/>
</dbReference>
<dbReference type="Gene3D" id="2.40.30.20">
    <property type="match status" value="1"/>
</dbReference>
<dbReference type="Gene3D" id="1.20.150.20">
    <property type="entry name" value="ATP synthase alpha/beta chain, C-terminal domain"/>
    <property type="match status" value="1"/>
</dbReference>
<dbReference type="Gene3D" id="3.40.50.300">
    <property type="entry name" value="P-loop containing nucleotide triphosphate hydrolases"/>
    <property type="match status" value="1"/>
</dbReference>
<dbReference type="HAMAP" id="MF_01346">
    <property type="entry name" value="ATP_synth_alpha_bact"/>
    <property type="match status" value="1"/>
</dbReference>
<dbReference type="InterPro" id="IPR023366">
    <property type="entry name" value="ATP_synth_asu-like_sf"/>
</dbReference>
<dbReference type="InterPro" id="IPR000793">
    <property type="entry name" value="ATP_synth_asu_C"/>
</dbReference>
<dbReference type="InterPro" id="IPR038376">
    <property type="entry name" value="ATP_synth_asu_C_sf"/>
</dbReference>
<dbReference type="InterPro" id="IPR033732">
    <property type="entry name" value="ATP_synth_F1_a_nt-bd_dom"/>
</dbReference>
<dbReference type="InterPro" id="IPR005294">
    <property type="entry name" value="ATP_synth_F1_asu"/>
</dbReference>
<dbReference type="InterPro" id="IPR020003">
    <property type="entry name" value="ATPase_a/bsu_AS"/>
</dbReference>
<dbReference type="InterPro" id="IPR004100">
    <property type="entry name" value="ATPase_F1/V1/A1_a/bsu_N"/>
</dbReference>
<dbReference type="InterPro" id="IPR036121">
    <property type="entry name" value="ATPase_F1/V1/A1_a/bsu_N_sf"/>
</dbReference>
<dbReference type="InterPro" id="IPR000194">
    <property type="entry name" value="ATPase_F1/V1/A1_a/bsu_nucl-bd"/>
</dbReference>
<dbReference type="InterPro" id="IPR027417">
    <property type="entry name" value="P-loop_NTPase"/>
</dbReference>
<dbReference type="NCBIfam" id="TIGR00962">
    <property type="entry name" value="atpA"/>
    <property type="match status" value="1"/>
</dbReference>
<dbReference type="NCBIfam" id="NF009884">
    <property type="entry name" value="PRK13343.1"/>
    <property type="match status" value="1"/>
</dbReference>
<dbReference type="PANTHER" id="PTHR48082">
    <property type="entry name" value="ATP SYNTHASE SUBUNIT ALPHA, MITOCHONDRIAL"/>
    <property type="match status" value="1"/>
</dbReference>
<dbReference type="PANTHER" id="PTHR48082:SF2">
    <property type="entry name" value="ATP SYNTHASE SUBUNIT ALPHA, MITOCHONDRIAL"/>
    <property type="match status" value="1"/>
</dbReference>
<dbReference type="Pfam" id="PF00006">
    <property type="entry name" value="ATP-synt_ab"/>
    <property type="match status" value="1"/>
</dbReference>
<dbReference type="Pfam" id="PF00306">
    <property type="entry name" value="ATP-synt_ab_C"/>
    <property type="match status" value="1"/>
</dbReference>
<dbReference type="Pfam" id="PF02874">
    <property type="entry name" value="ATP-synt_ab_N"/>
    <property type="match status" value="1"/>
</dbReference>
<dbReference type="PIRSF" id="PIRSF039088">
    <property type="entry name" value="F_ATPase_subunit_alpha"/>
    <property type="match status" value="1"/>
</dbReference>
<dbReference type="SUPFAM" id="SSF47917">
    <property type="entry name" value="C-terminal domain of alpha and beta subunits of F1 ATP synthase"/>
    <property type="match status" value="1"/>
</dbReference>
<dbReference type="SUPFAM" id="SSF50615">
    <property type="entry name" value="N-terminal domain of alpha and beta subunits of F1 ATP synthase"/>
    <property type="match status" value="1"/>
</dbReference>
<dbReference type="SUPFAM" id="SSF52540">
    <property type="entry name" value="P-loop containing nucleoside triphosphate hydrolases"/>
    <property type="match status" value="1"/>
</dbReference>
<dbReference type="PROSITE" id="PS00152">
    <property type="entry name" value="ATPASE_ALPHA_BETA"/>
    <property type="match status" value="1"/>
</dbReference>
<gene>
    <name evidence="1" type="primary">atpA</name>
    <name type="ordered locus">PA5556</name>
</gene>
<protein>
    <recommendedName>
        <fullName evidence="1">ATP synthase subunit alpha</fullName>
        <ecNumber evidence="1">7.1.2.2</ecNumber>
    </recommendedName>
    <alternativeName>
        <fullName evidence="1">ATP synthase F1 sector subunit alpha</fullName>
    </alternativeName>
    <alternativeName>
        <fullName evidence="1">F-ATPase subunit alpha</fullName>
    </alternativeName>
</protein>
<evidence type="ECO:0000255" key="1">
    <source>
        <dbReference type="HAMAP-Rule" id="MF_01346"/>
    </source>
</evidence>
<proteinExistence type="inferred from homology"/>
<organism>
    <name type="scientific">Pseudomonas aeruginosa (strain ATCC 15692 / DSM 22644 / CIP 104116 / JCM 14847 / LMG 12228 / 1C / PRS 101 / PAO1)</name>
    <dbReference type="NCBI Taxonomy" id="208964"/>
    <lineage>
        <taxon>Bacteria</taxon>
        <taxon>Pseudomonadati</taxon>
        <taxon>Pseudomonadota</taxon>
        <taxon>Gammaproteobacteria</taxon>
        <taxon>Pseudomonadales</taxon>
        <taxon>Pseudomonadaceae</taxon>
        <taxon>Pseudomonas</taxon>
    </lineage>
</organism>
<sequence length="514" mass="55393">MQQLNPSEISEIIKGRIEKLDVASQARNEGTIVSVSDGIVRIYGLADVMYGEMIEFPGGVYGMALNLEQDSVGAVVLGEYQGLAEGMNAKCTGRILEVPVGPELLGRVVDALGNPIDGKGPIDAKATDAVEKVAPGVIWRKSVDQPVQTGYKSVDAMIPVGRGQRELIIGDRQIGKTALAVDAIINQKDSGIKCVYVAIGQKQSTIANVVRKLEENGALANTIVVAASASESAALQYLAPYSGCTMGEYFRDRGEDALIVYDDLSKQAVAYRQISLLLRRPPGREAYPGDVFYLHSRLLERASRVSEEYVEKFTNGAVTGKTGSLTALPIIETQAGDVSAFVPTNVISITDGQIFLESAMFNSGIRPAVNAGISVSRVGGAAQTKIIKKLSGGIRTALAQYRELAAFAQFASDLDEATRKQLEHGQRVTELMKQKQYAPMSIAEMSLSLYAAERGFLQDVEIAKVGSFEQALISYFQREHAALLAKINEKGDFNDEIDAGIKAGIEKFKATQTW</sequence>